<sequence>MKKRLFVLSLILLVALDQLSKFWIVSHIALGEVKPFIPGIVSLTYLQNNGAAFSILQDQQWFFVVITVLVIGYAIYYLATHPHLNIWKQLALLLIISGGIGNFIDRLRLAYVIDMVHLDFVDFAIFNVADSYLTVGVILLVICLWKEEDYGN</sequence>
<protein>
    <recommendedName>
        <fullName evidence="1">Lipoprotein signal peptidase</fullName>
        <ecNumber evidence="1">3.4.23.36</ecNumber>
    </recommendedName>
    <alternativeName>
        <fullName evidence="1">Prolipoprotein signal peptidase</fullName>
    </alternativeName>
    <alternativeName>
        <fullName evidence="1">Signal peptidase II</fullName>
        <shortName evidence="1">SPase II</shortName>
    </alternativeName>
</protein>
<proteinExistence type="inferred from homology"/>
<dbReference type="EC" id="3.4.23.36" evidence="1"/>
<dbReference type="EMBL" id="BA000034">
    <property type="protein sequence ID" value="BAC64393.1"/>
    <property type="molecule type" value="Genomic_DNA"/>
</dbReference>
<dbReference type="RefSeq" id="WP_002985097.1">
    <property type="nucleotide sequence ID" value="NC_004606.1"/>
</dbReference>
<dbReference type="SMR" id="P0DC21"/>
<dbReference type="GeneID" id="69901059"/>
<dbReference type="KEGG" id="sps:SPs1298"/>
<dbReference type="HOGENOM" id="CLU_083252_3_3_9"/>
<dbReference type="UniPathway" id="UPA00665"/>
<dbReference type="GO" id="GO:0005886">
    <property type="term" value="C:plasma membrane"/>
    <property type="evidence" value="ECO:0007669"/>
    <property type="project" value="UniProtKB-SubCell"/>
</dbReference>
<dbReference type="GO" id="GO:0004190">
    <property type="term" value="F:aspartic-type endopeptidase activity"/>
    <property type="evidence" value="ECO:0007669"/>
    <property type="project" value="UniProtKB-UniRule"/>
</dbReference>
<dbReference type="GO" id="GO:0006508">
    <property type="term" value="P:proteolysis"/>
    <property type="evidence" value="ECO:0007669"/>
    <property type="project" value="UniProtKB-KW"/>
</dbReference>
<dbReference type="HAMAP" id="MF_00161">
    <property type="entry name" value="LspA"/>
    <property type="match status" value="1"/>
</dbReference>
<dbReference type="InterPro" id="IPR001872">
    <property type="entry name" value="Peptidase_A8"/>
</dbReference>
<dbReference type="NCBIfam" id="TIGR00077">
    <property type="entry name" value="lspA"/>
    <property type="match status" value="1"/>
</dbReference>
<dbReference type="PANTHER" id="PTHR33695">
    <property type="entry name" value="LIPOPROTEIN SIGNAL PEPTIDASE"/>
    <property type="match status" value="1"/>
</dbReference>
<dbReference type="PANTHER" id="PTHR33695:SF1">
    <property type="entry name" value="LIPOPROTEIN SIGNAL PEPTIDASE"/>
    <property type="match status" value="1"/>
</dbReference>
<dbReference type="Pfam" id="PF01252">
    <property type="entry name" value="Peptidase_A8"/>
    <property type="match status" value="1"/>
</dbReference>
<dbReference type="PRINTS" id="PR00781">
    <property type="entry name" value="LIPOSIGPTASE"/>
</dbReference>
<dbReference type="PROSITE" id="PS00855">
    <property type="entry name" value="SPASE_II"/>
    <property type="match status" value="1"/>
</dbReference>
<keyword id="KW-0064">Aspartyl protease</keyword>
<keyword id="KW-1003">Cell membrane</keyword>
<keyword id="KW-0378">Hydrolase</keyword>
<keyword id="KW-0472">Membrane</keyword>
<keyword id="KW-0645">Protease</keyword>
<keyword id="KW-0812">Transmembrane</keyword>
<keyword id="KW-1133">Transmembrane helix</keyword>
<organism>
    <name type="scientific">Streptococcus pyogenes serotype M3 (strain SSI-1)</name>
    <dbReference type="NCBI Taxonomy" id="193567"/>
    <lineage>
        <taxon>Bacteria</taxon>
        <taxon>Bacillati</taxon>
        <taxon>Bacillota</taxon>
        <taxon>Bacilli</taxon>
        <taxon>Lactobacillales</taxon>
        <taxon>Streptococcaceae</taxon>
        <taxon>Streptococcus</taxon>
    </lineage>
</organism>
<gene>
    <name evidence="1" type="primary">lspA</name>
    <name type="ordered locus">SPs1298</name>
</gene>
<evidence type="ECO:0000255" key="1">
    <source>
        <dbReference type="HAMAP-Rule" id="MF_00161"/>
    </source>
</evidence>
<accession>P0DC21</accession>
<accession>Q79WT8</accession>
<accession>Q8K7Y7</accession>
<name>LSPA_STRPQ</name>
<comment type="function">
    <text evidence="1">This protein specifically catalyzes the removal of signal peptides from prolipoproteins.</text>
</comment>
<comment type="catalytic activity">
    <reaction evidence="1">
        <text>Release of signal peptides from bacterial membrane prolipoproteins. Hydrolyzes -Xaa-Yaa-Zaa-|-(S,diacylglyceryl)Cys-, in which Xaa is hydrophobic (preferably Leu), and Yaa (Ala or Ser) and Zaa (Gly or Ala) have small, neutral side chains.</text>
        <dbReference type="EC" id="3.4.23.36"/>
    </reaction>
</comment>
<comment type="pathway">
    <text evidence="1">Protein modification; lipoprotein biosynthesis (signal peptide cleavage).</text>
</comment>
<comment type="subcellular location">
    <subcellularLocation>
        <location evidence="1">Cell membrane</location>
        <topology evidence="1">Multi-pass membrane protein</topology>
    </subcellularLocation>
</comment>
<comment type="similarity">
    <text evidence="1">Belongs to the peptidase A8 family.</text>
</comment>
<reference key="1">
    <citation type="journal article" date="2003" name="Genome Res.">
        <title>Genome sequence of an M3 strain of Streptococcus pyogenes reveals a large-scale genomic rearrangement in invasive strains and new insights into phage evolution.</title>
        <authorList>
            <person name="Nakagawa I."/>
            <person name="Kurokawa K."/>
            <person name="Yamashita A."/>
            <person name="Nakata M."/>
            <person name="Tomiyasu Y."/>
            <person name="Okahashi N."/>
            <person name="Kawabata S."/>
            <person name="Yamazaki K."/>
            <person name="Shiba T."/>
            <person name="Yasunaga T."/>
            <person name="Hayashi H."/>
            <person name="Hattori M."/>
            <person name="Hamada S."/>
        </authorList>
    </citation>
    <scope>NUCLEOTIDE SEQUENCE [LARGE SCALE GENOMIC DNA]</scope>
    <source>
        <strain>SSI-1</strain>
    </source>
</reference>
<feature type="chain" id="PRO_0000411398" description="Lipoprotein signal peptidase">
    <location>
        <begin position="1"/>
        <end position="152"/>
    </location>
</feature>
<feature type="transmembrane region" description="Helical" evidence="1">
    <location>
        <begin position="5"/>
        <end position="25"/>
    </location>
</feature>
<feature type="transmembrane region" description="Helical" evidence="1">
    <location>
        <begin position="61"/>
        <end position="81"/>
    </location>
</feature>
<feature type="transmembrane region" description="Helical" evidence="1">
    <location>
        <begin position="84"/>
        <end position="104"/>
    </location>
</feature>
<feature type="transmembrane region" description="Helical" evidence="1">
    <location>
        <begin position="125"/>
        <end position="145"/>
    </location>
</feature>
<feature type="active site" evidence="1">
    <location>
        <position position="114"/>
    </location>
</feature>
<feature type="active site" evidence="1">
    <location>
        <position position="130"/>
    </location>
</feature>